<gene>
    <name type="ordered locus">Rv0600c</name>
</gene>
<organism>
    <name type="scientific">Mycobacterium tuberculosis (strain ATCC 25618 / H37Rv)</name>
    <dbReference type="NCBI Taxonomy" id="83332"/>
    <lineage>
        <taxon>Bacteria</taxon>
        <taxon>Bacillati</taxon>
        <taxon>Actinomycetota</taxon>
        <taxon>Actinomycetes</taxon>
        <taxon>Mycobacteriales</taxon>
        <taxon>Mycobacteriaceae</taxon>
        <taxon>Mycobacterium</taxon>
        <taxon>Mycobacterium tuberculosis complex</taxon>
    </lineage>
</organism>
<reference key="1">
    <citation type="journal article" date="1998" name="Nature">
        <title>Deciphering the biology of Mycobacterium tuberculosis from the complete genome sequence.</title>
        <authorList>
            <person name="Cole S.T."/>
            <person name="Brosch R."/>
            <person name="Parkhill J."/>
            <person name="Garnier T."/>
            <person name="Churcher C.M."/>
            <person name="Harris D.E."/>
            <person name="Gordon S.V."/>
            <person name="Eiglmeier K."/>
            <person name="Gas S."/>
            <person name="Barry C.E. III"/>
            <person name="Tekaia F."/>
            <person name="Badcock K."/>
            <person name="Basham D."/>
            <person name="Brown D."/>
            <person name="Chillingworth T."/>
            <person name="Connor R."/>
            <person name="Davies R.M."/>
            <person name="Devlin K."/>
            <person name="Feltwell T."/>
            <person name="Gentles S."/>
            <person name="Hamlin N."/>
            <person name="Holroyd S."/>
            <person name="Hornsby T."/>
            <person name="Jagels K."/>
            <person name="Krogh A."/>
            <person name="McLean J."/>
            <person name="Moule S."/>
            <person name="Murphy L.D."/>
            <person name="Oliver S."/>
            <person name="Osborne J."/>
            <person name="Quail M.A."/>
            <person name="Rajandream M.A."/>
            <person name="Rogers J."/>
            <person name="Rutter S."/>
            <person name="Seeger K."/>
            <person name="Skelton S."/>
            <person name="Squares S."/>
            <person name="Squares R."/>
            <person name="Sulston J.E."/>
            <person name="Taylor K."/>
            <person name="Whitehead S."/>
            <person name="Barrell B.G."/>
        </authorList>
    </citation>
    <scope>NUCLEOTIDE SEQUENCE [LARGE SCALE GENOMIC DNA]</scope>
    <source>
        <strain>ATCC 25618 / H37Rv</strain>
    </source>
</reference>
<reference key="2">
    <citation type="journal article" date="2007" name="FEBS Lett.">
        <title>Probing the nucleotide binding and phosphorylation by the histidine kinase of a novel three-protein two-component system from Mycobacterium tuberculosis.</title>
        <authorList>
            <person name="Shrivastava R."/>
            <person name="Ghosh A.K."/>
            <person name="Das A.K."/>
        </authorList>
    </citation>
    <scope>FUNCTION</scope>
    <scope>ATP-BINDING</scope>
    <scope>CATALYTIC ACTIVITY</scope>
    <scope>BIOPHYSICOCHEMICAL PROPERTIES</scope>
    <source>
        <strain>ATCC 25618 / H37Rv</strain>
    </source>
</reference>
<reference key="3">
    <citation type="journal article" date="2009" name="Microbiology">
        <title>Intra- and intermolecular domain interactions among novel two-component system proteins coded by Rv0600c, Rv0601c and Rv0602c of Mycobacterium tuberculosis.</title>
        <authorList>
            <person name="Shrivastava R."/>
            <person name="Ghosh A.K."/>
            <person name="Das A.K."/>
        </authorList>
    </citation>
    <scope>INTERACTION WITH HK2</scope>
    <source>
        <strain>ATCC 25618 / H37Rv</strain>
    </source>
</reference>
<keyword id="KW-0067">ATP-binding</keyword>
<keyword id="KW-0418">Kinase</keyword>
<keyword id="KW-0547">Nucleotide-binding</keyword>
<keyword id="KW-1185">Reference proteome</keyword>
<keyword id="KW-0808">Transferase</keyword>
<keyword id="KW-0902">Two-component regulatory system</keyword>
<feature type="chain" id="PRO_0000391079" description="Sensor histidine kinase component HK1">
    <location>
        <begin position="1"/>
        <end position="168"/>
    </location>
</feature>
<feature type="domain" description="Histidine kinase; second part" evidence="1">
    <location>
        <begin position="1"/>
        <end position="141"/>
    </location>
</feature>
<feature type="region of interest" description="Disordered" evidence="2">
    <location>
        <begin position="137"/>
        <end position="168"/>
    </location>
</feature>
<feature type="compositionally biased region" description="Basic and acidic residues" evidence="2">
    <location>
        <begin position="143"/>
        <end position="168"/>
    </location>
</feature>
<evidence type="ECO:0000255" key="1">
    <source>
        <dbReference type="PROSITE-ProRule" id="PRU00107"/>
    </source>
</evidence>
<evidence type="ECO:0000256" key="2">
    <source>
        <dbReference type="SAM" id="MobiDB-lite"/>
    </source>
</evidence>
<evidence type="ECO:0000269" key="3">
    <source>
    </source>
</evidence>
<evidence type="ECO:0000269" key="4">
    <source>
    </source>
</evidence>
<evidence type="ECO:0000305" key="5"/>
<dbReference type="EC" id="2.7.13.3"/>
<dbReference type="EMBL" id="AL123456">
    <property type="protein sequence ID" value="CCP43339.1"/>
    <property type="molecule type" value="Genomic_DNA"/>
</dbReference>
<dbReference type="PIR" id="C70909">
    <property type="entry name" value="C70909"/>
</dbReference>
<dbReference type="RefSeq" id="NP_215114.2">
    <property type="nucleotide sequence ID" value="NC_000962.3"/>
</dbReference>
<dbReference type="RefSeq" id="WP_003900973.1">
    <property type="nucleotide sequence ID" value="NZ_NVQJ01000033.1"/>
</dbReference>
<dbReference type="SMR" id="O07778"/>
<dbReference type="FunCoup" id="O07778">
    <property type="interactions" value="1"/>
</dbReference>
<dbReference type="IntAct" id="O07778">
    <property type="interactions" value="1"/>
</dbReference>
<dbReference type="MINT" id="O07778"/>
<dbReference type="STRING" id="83332.Rv0600c"/>
<dbReference type="PaxDb" id="83332-Rv0600c"/>
<dbReference type="DNASU" id="887847"/>
<dbReference type="GeneID" id="887847"/>
<dbReference type="KEGG" id="mtu:Rv0600c"/>
<dbReference type="KEGG" id="mtv:RVBD_0600c"/>
<dbReference type="TubercuList" id="Rv0600c"/>
<dbReference type="eggNOG" id="COG2205">
    <property type="taxonomic scope" value="Bacteria"/>
</dbReference>
<dbReference type="InParanoid" id="O07778"/>
<dbReference type="OrthoDB" id="9786919at2"/>
<dbReference type="PhylomeDB" id="O07778"/>
<dbReference type="SABIO-RK" id="O07778"/>
<dbReference type="Proteomes" id="UP000001584">
    <property type="component" value="Chromosome"/>
</dbReference>
<dbReference type="GO" id="GO:0005524">
    <property type="term" value="F:ATP binding"/>
    <property type="evidence" value="ECO:0007669"/>
    <property type="project" value="UniProtKB-KW"/>
</dbReference>
<dbReference type="GO" id="GO:0000156">
    <property type="term" value="F:phosphorelay response regulator activity"/>
    <property type="evidence" value="ECO:0000314"/>
    <property type="project" value="MTBBASE"/>
</dbReference>
<dbReference type="GO" id="GO:0004673">
    <property type="term" value="F:protein histidine kinase activity"/>
    <property type="evidence" value="ECO:0007669"/>
    <property type="project" value="UniProtKB-EC"/>
</dbReference>
<dbReference type="GO" id="GO:0004672">
    <property type="term" value="F:protein kinase activity"/>
    <property type="evidence" value="ECO:0000314"/>
    <property type="project" value="MTBBASE"/>
</dbReference>
<dbReference type="GO" id="GO:0070298">
    <property type="term" value="P:negative regulation of phosphorelay signal transduction system"/>
    <property type="evidence" value="ECO:0000314"/>
    <property type="project" value="MTBBASE"/>
</dbReference>
<dbReference type="CDD" id="cd00075">
    <property type="entry name" value="HATPase"/>
    <property type="match status" value="1"/>
</dbReference>
<dbReference type="FunFam" id="3.30.565.10:FF:000153">
    <property type="entry name" value="Two component sensor kinase HK1"/>
    <property type="match status" value="1"/>
</dbReference>
<dbReference type="Gene3D" id="3.30.565.10">
    <property type="entry name" value="Histidine kinase-like ATPase, C-terminal domain"/>
    <property type="match status" value="1"/>
</dbReference>
<dbReference type="InterPro" id="IPR050980">
    <property type="entry name" value="2C_sensor_his_kinase"/>
</dbReference>
<dbReference type="InterPro" id="IPR036890">
    <property type="entry name" value="HATPase_C_sf"/>
</dbReference>
<dbReference type="InterPro" id="IPR005467">
    <property type="entry name" value="His_kinase_dom"/>
</dbReference>
<dbReference type="InterPro" id="IPR004358">
    <property type="entry name" value="Sig_transdc_His_kin-like_C"/>
</dbReference>
<dbReference type="PANTHER" id="PTHR44936">
    <property type="entry name" value="SENSOR PROTEIN CREC"/>
    <property type="match status" value="1"/>
</dbReference>
<dbReference type="PANTHER" id="PTHR44936:SF10">
    <property type="entry name" value="SENSOR PROTEIN RSTB"/>
    <property type="match status" value="1"/>
</dbReference>
<dbReference type="Pfam" id="PF02518">
    <property type="entry name" value="HATPase_c"/>
    <property type="match status" value="1"/>
</dbReference>
<dbReference type="PRINTS" id="PR00344">
    <property type="entry name" value="BCTRLSENSOR"/>
</dbReference>
<dbReference type="SMART" id="SM00387">
    <property type="entry name" value="HATPase_c"/>
    <property type="match status" value="1"/>
</dbReference>
<dbReference type="SUPFAM" id="SSF55874">
    <property type="entry name" value="ATPase domain of HSP90 chaperone/DNA topoisomerase II/histidine kinase"/>
    <property type="match status" value="1"/>
</dbReference>
<dbReference type="PROSITE" id="PS50109">
    <property type="entry name" value="HIS_KIN"/>
    <property type="match status" value="1"/>
</dbReference>
<protein>
    <recommendedName>
        <fullName>Sensor histidine kinase component HK1</fullName>
        <ecNumber>2.7.13.3</ecNumber>
    </recommendedName>
</protein>
<name>HK1_MYCTU</name>
<proteinExistence type="evidence at protein level"/>
<accession>O07778</accession>
<accession>L0T5V1</accession>
<comment type="function">
    <text evidence="3">Member of the three-protein two-component system HK1/HK2/TcrA. Kinase that binds ATP and catalyzes the transfer of a phosphoryl group from ATP to HK2.</text>
</comment>
<comment type="catalytic activity">
    <reaction evidence="3">
        <text>ATP + protein L-histidine = ADP + protein N-phospho-L-histidine.</text>
        <dbReference type="EC" id="2.7.13.3"/>
    </reaction>
</comment>
<comment type="biophysicochemical properties">
    <kinetics>
        <KM evidence="3">5.75 mM for ATP</KM>
    </kinetics>
</comment>
<comment type="subunit">
    <text evidence="4">Interacts with HK2.</text>
</comment>
<comment type="miscellaneous">
    <text>HK1 and HK2 are merged into a single protein with a distinct N-terminal sequence in strain CDC 1551 / Oshkosh.</text>
</comment>
<comment type="caution">
    <text evidence="5">HK1 and HK2 are incomplete as individual proteins but can complement each other's function.</text>
</comment>
<sequence length="168" mass="17854">MPITPLLHESVARFAATGADITTRAEPDLFVSIDPDHLRRILTAVLDNAITHGDGEIAVTAHARDGAVDIGVRDHGPGFADHFLPVAFDRFTRADTARGGRGSGLGLAIVAALTTTHGGHANATNHPDGGAELRITLPTPRPPFHEELPRITSSDTKDPNREHDTSDQ</sequence>